<protein>
    <recommendedName>
        <fullName evidence="1">Large ribosomal subunit protein bL21</fullName>
    </recommendedName>
    <alternativeName>
        <fullName evidence="2">50S ribosomal protein L21</fullName>
    </alternativeName>
</protein>
<reference key="1">
    <citation type="journal article" date="2003" name="Genome Res.">
        <title>Tropheryma whipplei twist: a human pathogenic Actinobacteria with a reduced genome.</title>
        <authorList>
            <person name="Raoult D."/>
            <person name="Ogata H."/>
            <person name="Audic S."/>
            <person name="Robert C."/>
            <person name="Suhre K."/>
            <person name="Drancourt M."/>
            <person name="Claverie J.-M."/>
        </authorList>
    </citation>
    <scope>NUCLEOTIDE SEQUENCE [LARGE SCALE GENOMIC DNA]</scope>
    <source>
        <strain>Twist</strain>
    </source>
</reference>
<name>RL21_TROWT</name>
<keyword id="KW-1185">Reference proteome</keyword>
<keyword id="KW-0687">Ribonucleoprotein</keyword>
<keyword id="KW-0689">Ribosomal protein</keyword>
<keyword id="KW-0694">RNA-binding</keyword>
<keyword id="KW-0699">rRNA-binding</keyword>
<proteinExistence type="inferred from homology"/>
<sequence>MFAVVKASGFQRLVEVGSVISIDPTNVDSGGFVHFPVLLLVDGAEVVSDPDKLRLARVSAKFLRKLRGPKVRIHKFKNKTGYHKRQGHRQGVYVFSVTSIERGD</sequence>
<organism>
    <name type="scientific">Tropheryma whipplei (strain Twist)</name>
    <name type="common">Whipple's bacillus</name>
    <dbReference type="NCBI Taxonomy" id="203267"/>
    <lineage>
        <taxon>Bacteria</taxon>
        <taxon>Bacillati</taxon>
        <taxon>Actinomycetota</taxon>
        <taxon>Actinomycetes</taxon>
        <taxon>Micrococcales</taxon>
        <taxon>Tropherymataceae</taxon>
        <taxon>Tropheryma</taxon>
    </lineage>
</organism>
<dbReference type="EMBL" id="AE014184">
    <property type="protein sequence ID" value="AAO44570.1"/>
    <property type="status" value="ALT_INIT"/>
    <property type="molecule type" value="Genomic_DNA"/>
</dbReference>
<dbReference type="RefSeq" id="WP_011102595.1">
    <property type="nucleotide sequence ID" value="NC_004572.3"/>
</dbReference>
<dbReference type="SMR" id="Q83G55"/>
<dbReference type="STRING" id="203267.TWT_473"/>
<dbReference type="KEGG" id="twh:TWT_473"/>
<dbReference type="eggNOG" id="COG0261">
    <property type="taxonomic scope" value="Bacteria"/>
</dbReference>
<dbReference type="HOGENOM" id="CLU_061463_3_0_11"/>
<dbReference type="OrthoDB" id="9813334at2"/>
<dbReference type="Proteomes" id="UP000002200">
    <property type="component" value="Chromosome"/>
</dbReference>
<dbReference type="GO" id="GO:0005737">
    <property type="term" value="C:cytoplasm"/>
    <property type="evidence" value="ECO:0007669"/>
    <property type="project" value="UniProtKB-ARBA"/>
</dbReference>
<dbReference type="GO" id="GO:1990904">
    <property type="term" value="C:ribonucleoprotein complex"/>
    <property type="evidence" value="ECO:0007669"/>
    <property type="project" value="UniProtKB-KW"/>
</dbReference>
<dbReference type="GO" id="GO:0005840">
    <property type="term" value="C:ribosome"/>
    <property type="evidence" value="ECO:0007669"/>
    <property type="project" value="UniProtKB-KW"/>
</dbReference>
<dbReference type="GO" id="GO:0019843">
    <property type="term" value="F:rRNA binding"/>
    <property type="evidence" value="ECO:0007669"/>
    <property type="project" value="UniProtKB-UniRule"/>
</dbReference>
<dbReference type="GO" id="GO:0003735">
    <property type="term" value="F:structural constituent of ribosome"/>
    <property type="evidence" value="ECO:0007669"/>
    <property type="project" value="InterPro"/>
</dbReference>
<dbReference type="GO" id="GO:0006412">
    <property type="term" value="P:translation"/>
    <property type="evidence" value="ECO:0007669"/>
    <property type="project" value="UniProtKB-UniRule"/>
</dbReference>
<dbReference type="HAMAP" id="MF_01363">
    <property type="entry name" value="Ribosomal_bL21"/>
    <property type="match status" value="1"/>
</dbReference>
<dbReference type="InterPro" id="IPR028909">
    <property type="entry name" value="bL21-like"/>
</dbReference>
<dbReference type="InterPro" id="IPR036164">
    <property type="entry name" value="bL21-like_sf"/>
</dbReference>
<dbReference type="InterPro" id="IPR001787">
    <property type="entry name" value="Ribosomal_bL21"/>
</dbReference>
<dbReference type="NCBIfam" id="TIGR00061">
    <property type="entry name" value="L21"/>
    <property type="match status" value="1"/>
</dbReference>
<dbReference type="Pfam" id="PF00829">
    <property type="entry name" value="Ribosomal_L21p"/>
    <property type="match status" value="1"/>
</dbReference>
<dbReference type="SUPFAM" id="SSF141091">
    <property type="entry name" value="L21p-like"/>
    <property type="match status" value="1"/>
</dbReference>
<gene>
    <name evidence="1" type="primary">rplU</name>
    <name type="ordered locus">TWT_473</name>
</gene>
<feature type="chain" id="PRO_0000270744" description="Large ribosomal subunit protein bL21">
    <location>
        <begin position="1"/>
        <end position="104"/>
    </location>
</feature>
<comment type="function">
    <text evidence="1">This protein binds to 23S rRNA in the presence of protein L20.</text>
</comment>
<comment type="subunit">
    <text evidence="1">Part of the 50S ribosomal subunit. Contacts protein L20.</text>
</comment>
<comment type="similarity">
    <text evidence="1">Belongs to the bacterial ribosomal protein bL21 family.</text>
</comment>
<comment type="sequence caution" evidence="2">
    <conflict type="erroneous initiation">
        <sequence resource="EMBL-CDS" id="AAO44570"/>
    </conflict>
</comment>
<evidence type="ECO:0000255" key="1">
    <source>
        <dbReference type="HAMAP-Rule" id="MF_01363"/>
    </source>
</evidence>
<evidence type="ECO:0000305" key="2"/>
<accession>Q83G55</accession>